<comment type="function">
    <text evidence="4 5 6">Acts as a transcriptional activator. Binds to the GCC-box pathogenesis-related promoter element. Involved in the regulation of gene expression by stress factors and by components of stress signal transduction pathways. Involved in disease resistance pathways.</text>
</comment>
<comment type="subcellular location">
    <subcellularLocation>
        <location evidence="7">Nucleus</location>
    </subcellularLocation>
</comment>
<comment type="induction">
    <text evidence="4 5">Induced by jasmonate (JA) and Alternaria brassicicola (locally and systemically). Ethylene induction is completely dependent on a functional ETHYLENE-INSENSITIVE2 (EIN2) while wounding induction does not require EIN2. Transcripts accumulate strongly in cycloheximide-treated plants, a protein synthesis inhibitor. Seems to not be influenced by exogenous abscisic acid (ABA), cold, heat, NaCl or drought stress.</text>
</comment>
<comment type="domain">
    <text evidence="1">The AP2/ERF domain binds specifically to the 5'-GCCGCC-3' motif. The affinity of this binding is higher if the seventh amino-acid of this domain is basic (By similarity).</text>
</comment>
<comment type="similarity">
    <text evidence="7">Belongs to the AP2/ERF transcription factor family. ERF subfamily.</text>
</comment>
<feature type="chain" id="PRO_0000112546" description="Ethylene-responsive transcription factor 2">
    <location>
        <begin position="1"/>
        <end position="243"/>
    </location>
</feature>
<feature type="DNA-binding region" description="AP2/ERF" evidence="2">
    <location>
        <begin position="116"/>
        <end position="174"/>
    </location>
</feature>
<feature type="region of interest" description="Disordered" evidence="3">
    <location>
        <begin position="181"/>
        <end position="219"/>
    </location>
</feature>
<feature type="compositionally biased region" description="Low complexity" evidence="3">
    <location>
        <begin position="192"/>
        <end position="206"/>
    </location>
</feature>
<feature type="sequence conflict" description="In Ref. 6; AAM64544." evidence="7" ref="6">
    <original>R</original>
    <variation>S</variation>
    <location>
        <position position="168"/>
    </location>
</feature>
<gene>
    <name type="primary">ERF2</name>
    <name type="synonym">ERF-2</name>
    <name type="synonym">ERF101</name>
    <name type="ordered locus">At5g47220</name>
    <name type="ORF">MQL5.7</name>
</gene>
<evidence type="ECO:0000250" key="1"/>
<evidence type="ECO:0000255" key="2">
    <source>
        <dbReference type="PROSITE-ProRule" id="PRU00366"/>
    </source>
</evidence>
<evidence type="ECO:0000256" key="3">
    <source>
        <dbReference type="SAM" id="MobiDB-lite"/>
    </source>
</evidence>
<evidence type="ECO:0000269" key="4">
    <source>
    </source>
</evidence>
<evidence type="ECO:0000269" key="5">
    <source>
    </source>
</evidence>
<evidence type="ECO:0000269" key="6">
    <source>
    </source>
</evidence>
<evidence type="ECO:0000305" key="7"/>
<name>EF101_ARATH</name>
<protein>
    <recommendedName>
        <fullName>Ethylene-responsive transcription factor 2</fullName>
        <shortName>AtERF2</shortName>
    </recommendedName>
    <alternativeName>
        <fullName>Ethylene-responsive element-binding factor 2</fullName>
        <shortName>EREBP-2</shortName>
    </alternativeName>
</protein>
<dbReference type="EMBL" id="AB008104">
    <property type="protein sequence ID" value="BAA32419.1"/>
    <property type="molecule type" value="mRNA"/>
</dbReference>
<dbReference type="EMBL" id="AB018117">
    <property type="protein sequence ID" value="BAA97155.1"/>
    <property type="molecule type" value="Genomic_DNA"/>
</dbReference>
<dbReference type="EMBL" id="CP002688">
    <property type="protein sequence ID" value="AED95487.1"/>
    <property type="molecule type" value="Genomic_DNA"/>
</dbReference>
<dbReference type="EMBL" id="AK175151">
    <property type="protein sequence ID" value="BAD42914.1"/>
    <property type="molecule type" value="mRNA"/>
</dbReference>
<dbReference type="EMBL" id="AK175229">
    <property type="protein sequence ID" value="BAD42992.1"/>
    <property type="molecule type" value="mRNA"/>
</dbReference>
<dbReference type="EMBL" id="AK176532">
    <property type="protein sequence ID" value="BAD44295.1"/>
    <property type="molecule type" value="mRNA"/>
</dbReference>
<dbReference type="EMBL" id="AK176606">
    <property type="protein sequence ID" value="BAD44369.1"/>
    <property type="molecule type" value="mRNA"/>
</dbReference>
<dbReference type="EMBL" id="AK176825">
    <property type="protein sequence ID" value="BAD44588.1"/>
    <property type="molecule type" value="mRNA"/>
</dbReference>
<dbReference type="EMBL" id="BT024470">
    <property type="protein sequence ID" value="ABD19651.1"/>
    <property type="molecule type" value="mRNA"/>
</dbReference>
<dbReference type="EMBL" id="AY086983">
    <property type="protein sequence ID" value="AAM64544.1"/>
    <property type="molecule type" value="mRNA"/>
</dbReference>
<dbReference type="PIR" id="T51989">
    <property type="entry name" value="T51989"/>
</dbReference>
<dbReference type="RefSeq" id="NP_199533.1">
    <property type="nucleotide sequence ID" value="NM_124093.3"/>
</dbReference>
<dbReference type="SMR" id="O80338"/>
<dbReference type="BioGRID" id="20016">
    <property type="interactions" value="11"/>
</dbReference>
<dbReference type="FunCoup" id="O80338">
    <property type="interactions" value="312"/>
</dbReference>
<dbReference type="IntAct" id="O80338">
    <property type="interactions" value="6"/>
</dbReference>
<dbReference type="STRING" id="3702.O80338"/>
<dbReference type="PaxDb" id="3702-AT5G47220.1"/>
<dbReference type="EnsemblPlants" id="AT5G47220.1">
    <property type="protein sequence ID" value="AT5G47220.1"/>
    <property type="gene ID" value="AT5G47220"/>
</dbReference>
<dbReference type="GeneID" id="834768"/>
<dbReference type="Gramene" id="AT5G47220.1">
    <property type="protein sequence ID" value="AT5G47220.1"/>
    <property type="gene ID" value="AT5G47220"/>
</dbReference>
<dbReference type="KEGG" id="ath:AT5G47220"/>
<dbReference type="Araport" id="AT5G47220"/>
<dbReference type="TAIR" id="AT5G47220">
    <property type="gene designation" value="ERF2"/>
</dbReference>
<dbReference type="eggNOG" id="ENOG502QRIC">
    <property type="taxonomic scope" value="Eukaryota"/>
</dbReference>
<dbReference type="HOGENOM" id="CLU_058713_3_0_1"/>
<dbReference type="InParanoid" id="O80338"/>
<dbReference type="OMA" id="LSCITEF"/>
<dbReference type="OrthoDB" id="1911211at2759"/>
<dbReference type="PhylomeDB" id="O80338"/>
<dbReference type="PRO" id="PR:O80338"/>
<dbReference type="Proteomes" id="UP000006548">
    <property type="component" value="Chromosome 5"/>
</dbReference>
<dbReference type="ExpressionAtlas" id="O80338">
    <property type="expression patterns" value="baseline and differential"/>
</dbReference>
<dbReference type="GO" id="GO:0005634">
    <property type="term" value="C:nucleus"/>
    <property type="evidence" value="ECO:0000304"/>
    <property type="project" value="TAIR"/>
</dbReference>
<dbReference type="GO" id="GO:0003700">
    <property type="term" value="F:DNA-binding transcription factor activity"/>
    <property type="evidence" value="ECO:0000314"/>
    <property type="project" value="TAIR"/>
</dbReference>
<dbReference type="GO" id="GO:0000976">
    <property type="term" value="F:transcription cis-regulatory region binding"/>
    <property type="evidence" value="ECO:0000353"/>
    <property type="project" value="TAIR"/>
</dbReference>
<dbReference type="GO" id="GO:0051301">
    <property type="term" value="P:cell division"/>
    <property type="evidence" value="ECO:0000270"/>
    <property type="project" value="TAIR"/>
</dbReference>
<dbReference type="GO" id="GO:0009873">
    <property type="term" value="P:ethylene-activated signaling pathway"/>
    <property type="evidence" value="ECO:0000304"/>
    <property type="project" value="TAIR"/>
</dbReference>
<dbReference type="GO" id="GO:0009864">
    <property type="term" value="P:induced systemic resistance, jasmonic acid mediated signaling pathway"/>
    <property type="evidence" value="ECO:0000315"/>
    <property type="project" value="TAIR"/>
</dbReference>
<dbReference type="GO" id="GO:0010087">
    <property type="term" value="P:phloem or xylem histogenesis"/>
    <property type="evidence" value="ECO:0000270"/>
    <property type="project" value="TAIR"/>
</dbReference>
<dbReference type="GO" id="GO:0045893">
    <property type="term" value="P:positive regulation of DNA-templated transcription"/>
    <property type="evidence" value="ECO:0000314"/>
    <property type="project" value="TAIR"/>
</dbReference>
<dbReference type="CDD" id="cd00018">
    <property type="entry name" value="AP2"/>
    <property type="match status" value="1"/>
</dbReference>
<dbReference type="FunFam" id="3.30.730.10:FF:000001">
    <property type="entry name" value="Ethylene-responsive transcription factor 2"/>
    <property type="match status" value="1"/>
</dbReference>
<dbReference type="Gene3D" id="3.30.730.10">
    <property type="entry name" value="AP2/ERF domain"/>
    <property type="match status" value="1"/>
</dbReference>
<dbReference type="InterPro" id="IPR001471">
    <property type="entry name" value="AP2/ERF_dom"/>
</dbReference>
<dbReference type="InterPro" id="IPR036955">
    <property type="entry name" value="AP2/ERF_dom_sf"/>
</dbReference>
<dbReference type="InterPro" id="IPR016177">
    <property type="entry name" value="DNA-bd_dom_sf"/>
</dbReference>
<dbReference type="InterPro" id="IPR044808">
    <property type="entry name" value="ERF_plant"/>
</dbReference>
<dbReference type="PANTHER" id="PTHR31190">
    <property type="entry name" value="DNA-BINDING DOMAIN"/>
    <property type="match status" value="1"/>
</dbReference>
<dbReference type="PANTHER" id="PTHR31190:SF378">
    <property type="entry name" value="ETHYLENE-RESPONSIVE TRANSCRIPTION FACTOR 2"/>
    <property type="match status" value="1"/>
</dbReference>
<dbReference type="Pfam" id="PF00847">
    <property type="entry name" value="AP2"/>
    <property type="match status" value="1"/>
</dbReference>
<dbReference type="PRINTS" id="PR00367">
    <property type="entry name" value="ETHRSPELEMNT"/>
</dbReference>
<dbReference type="SMART" id="SM00380">
    <property type="entry name" value="AP2"/>
    <property type="match status" value="1"/>
</dbReference>
<dbReference type="SUPFAM" id="SSF54171">
    <property type="entry name" value="DNA-binding domain"/>
    <property type="match status" value="1"/>
</dbReference>
<dbReference type="PROSITE" id="PS51032">
    <property type="entry name" value="AP2_ERF"/>
    <property type="match status" value="1"/>
</dbReference>
<keyword id="KW-0010">Activator</keyword>
<keyword id="KW-0238">DNA-binding</keyword>
<keyword id="KW-0936">Ethylene signaling pathway</keyword>
<keyword id="KW-0539">Nucleus</keyword>
<keyword id="KW-0611">Plant defense</keyword>
<keyword id="KW-1185">Reference proteome</keyword>
<keyword id="KW-0804">Transcription</keyword>
<keyword id="KW-0805">Transcription regulation</keyword>
<reference key="1">
    <citation type="journal article" date="2000" name="Plant Cell">
        <title>Arabidopsis ethylene responsive element binding factors act as transcriptional activators or repressors of GCC box mediated gene expression.</title>
        <authorList>
            <person name="Fujimoto S.Y."/>
            <person name="Ohta M."/>
            <person name="Usui A."/>
            <person name="Shinshi H."/>
            <person name="Ohme-Takagi M."/>
        </authorList>
    </citation>
    <scope>NUCLEOTIDE SEQUENCE [MRNA]</scope>
    <scope>FUNCTION</scope>
    <scope>INDUCTION</scope>
</reference>
<reference key="2">
    <citation type="journal article" date="2000" name="DNA Res.">
        <title>Structural analysis of Arabidopsis thaliana chromosome 5. X. Sequence features of the regions of 3,076,755 bp covered by sixty P1 and TAC clones.</title>
        <authorList>
            <person name="Sato S."/>
            <person name="Nakamura Y."/>
            <person name="Kaneko T."/>
            <person name="Katoh T."/>
            <person name="Asamizu E."/>
            <person name="Kotani H."/>
            <person name="Tabata S."/>
        </authorList>
    </citation>
    <scope>NUCLEOTIDE SEQUENCE [LARGE SCALE GENOMIC DNA]</scope>
    <source>
        <strain>cv. Columbia</strain>
    </source>
</reference>
<reference key="3">
    <citation type="journal article" date="2017" name="Plant J.">
        <title>Araport11: a complete reannotation of the Arabidopsis thaliana reference genome.</title>
        <authorList>
            <person name="Cheng C.Y."/>
            <person name="Krishnakumar V."/>
            <person name="Chan A.P."/>
            <person name="Thibaud-Nissen F."/>
            <person name="Schobel S."/>
            <person name="Town C.D."/>
        </authorList>
    </citation>
    <scope>GENOME REANNOTATION</scope>
    <source>
        <strain>cv. Columbia</strain>
    </source>
</reference>
<reference key="4">
    <citation type="submission" date="2004-09" db="EMBL/GenBank/DDBJ databases">
        <title>Large-scale analysis of RIKEN Arabidopsis full-length (RAFL) cDNAs.</title>
        <authorList>
            <person name="Totoki Y."/>
            <person name="Seki M."/>
            <person name="Ishida J."/>
            <person name="Nakajima M."/>
            <person name="Enju A."/>
            <person name="Kamiya A."/>
            <person name="Narusaka M."/>
            <person name="Shin-i T."/>
            <person name="Nakagawa M."/>
            <person name="Sakamoto N."/>
            <person name="Oishi K."/>
            <person name="Kohara Y."/>
            <person name="Kobayashi M."/>
            <person name="Toyoda A."/>
            <person name="Sakaki Y."/>
            <person name="Sakurai T."/>
            <person name="Iida K."/>
            <person name="Akiyama K."/>
            <person name="Satou M."/>
            <person name="Toyoda T."/>
            <person name="Konagaya A."/>
            <person name="Carninci P."/>
            <person name="Kawai J."/>
            <person name="Hayashizaki Y."/>
            <person name="Shinozaki K."/>
        </authorList>
    </citation>
    <scope>NUCLEOTIDE SEQUENCE [LARGE SCALE MRNA]</scope>
    <source>
        <strain>cv. Columbia</strain>
    </source>
</reference>
<reference key="5">
    <citation type="submission" date="2006-02" db="EMBL/GenBank/DDBJ databases">
        <title>Arabidopsis ORF clones.</title>
        <authorList>
            <person name="Shinn P."/>
            <person name="Chen H."/>
            <person name="Kim C.J."/>
            <person name="Ecker J.R."/>
        </authorList>
    </citation>
    <scope>NUCLEOTIDE SEQUENCE [LARGE SCALE MRNA]</scope>
    <source>
        <strain>cv. Columbia</strain>
    </source>
</reference>
<reference key="6">
    <citation type="submission" date="2002-03" db="EMBL/GenBank/DDBJ databases">
        <title>Full-length cDNA from Arabidopsis thaliana.</title>
        <authorList>
            <person name="Brover V.V."/>
            <person name="Troukhan M.E."/>
            <person name="Alexandrov N.A."/>
            <person name="Lu Y.-P."/>
            <person name="Flavell R.B."/>
            <person name="Feldmann K.A."/>
        </authorList>
    </citation>
    <scope>NUCLEOTIDE SEQUENCE [LARGE SCALE MRNA]</scope>
</reference>
<reference key="7">
    <citation type="journal article" date="1998" name="J. Biol. Chem.">
        <title>Unique mode of GCC box recognition by the DNA-binding domain of ethylene-responsive element-binding factor (ERF domain) in plant.</title>
        <authorList>
            <person name="Hao D."/>
            <person name="Ohme-Takagi M."/>
            <person name="Sarai A."/>
        </authorList>
    </citation>
    <scope>FUNCTION</scope>
</reference>
<reference key="8">
    <citation type="journal article" date="2003" name="Plant Physiol.">
        <title>A role for the GCC-box in jasmonate-mediated activation of the PDF1.2 gene of Arabidopsis.</title>
        <authorList>
            <person name="Brown R.L."/>
            <person name="Kazan K."/>
            <person name="McGrath K.C."/>
            <person name="Maclean D.J."/>
            <person name="Manners J.M."/>
        </authorList>
    </citation>
    <scope>FUNCTION</scope>
    <scope>INDUCTION</scope>
</reference>
<reference key="9">
    <citation type="journal article" date="2006" name="Plant Physiol.">
        <title>Genome-wide analysis of the ERF gene family in Arabidopsis and rice.</title>
        <authorList>
            <person name="Nakano T."/>
            <person name="Suzuki K."/>
            <person name="Fujimura T."/>
            <person name="Shinshi H."/>
        </authorList>
    </citation>
    <scope>GENE FAMILY</scope>
    <scope>NOMENCLATURE</scope>
</reference>
<organism>
    <name type="scientific">Arabidopsis thaliana</name>
    <name type="common">Mouse-ear cress</name>
    <dbReference type="NCBI Taxonomy" id="3702"/>
    <lineage>
        <taxon>Eukaryota</taxon>
        <taxon>Viridiplantae</taxon>
        <taxon>Streptophyta</taxon>
        <taxon>Embryophyta</taxon>
        <taxon>Tracheophyta</taxon>
        <taxon>Spermatophyta</taxon>
        <taxon>Magnoliopsida</taxon>
        <taxon>eudicotyledons</taxon>
        <taxon>Gunneridae</taxon>
        <taxon>Pentapetalae</taxon>
        <taxon>rosids</taxon>
        <taxon>malvids</taxon>
        <taxon>Brassicales</taxon>
        <taxon>Brassicaceae</taxon>
        <taxon>Camelineae</taxon>
        <taxon>Arabidopsis</taxon>
    </lineage>
</organism>
<proteinExistence type="evidence at transcript level"/>
<sequence length="243" mass="26797">MYGQCNIESDYALLESITRHLLGGGGENELRLNESTPSSCFTESWGGLPLKENDSEDMLVYGLLKDAFHFDTSSSDLSCLFDFPAVKVEPTENFTAMEEKPKKAIPVTETAVKAKHYRGVRQRPWGKFAAEIRDPAKNGARVWLGTFETAEDAALAYDIAAFRMRGSRALLNFPLRVNSGEPDPVRITSKRSSSSSSSSSSSTSSSENGKLKRRRKAENLTSEVVQVKCEVGDETRVDELLVS</sequence>
<accession>O80338</accession>
<accession>Q682Y8</accession>
<accession>Q8LBU9</accession>